<feature type="chain" id="PRO_1000184135" description="Large ribosomal subunit protein uL30">
    <location>
        <begin position="1"/>
        <end position="59"/>
    </location>
</feature>
<name>RL30_CLOBJ</name>
<dbReference type="EMBL" id="CP001581">
    <property type="protein sequence ID" value="ACO85861.1"/>
    <property type="molecule type" value="Genomic_DNA"/>
</dbReference>
<dbReference type="RefSeq" id="WP_003357637.1">
    <property type="nucleotide sequence ID" value="NC_012563.1"/>
</dbReference>
<dbReference type="SMR" id="C1FMT3"/>
<dbReference type="GeneID" id="92940232"/>
<dbReference type="KEGG" id="cby:CLM_3930"/>
<dbReference type="eggNOG" id="COG1841">
    <property type="taxonomic scope" value="Bacteria"/>
</dbReference>
<dbReference type="HOGENOM" id="CLU_131047_2_1_9"/>
<dbReference type="Proteomes" id="UP000001374">
    <property type="component" value="Chromosome"/>
</dbReference>
<dbReference type="GO" id="GO:0022625">
    <property type="term" value="C:cytosolic large ribosomal subunit"/>
    <property type="evidence" value="ECO:0007669"/>
    <property type="project" value="TreeGrafter"/>
</dbReference>
<dbReference type="GO" id="GO:0003735">
    <property type="term" value="F:structural constituent of ribosome"/>
    <property type="evidence" value="ECO:0007669"/>
    <property type="project" value="InterPro"/>
</dbReference>
<dbReference type="GO" id="GO:0006412">
    <property type="term" value="P:translation"/>
    <property type="evidence" value="ECO:0007669"/>
    <property type="project" value="UniProtKB-UniRule"/>
</dbReference>
<dbReference type="CDD" id="cd01658">
    <property type="entry name" value="Ribosomal_L30"/>
    <property type="match status" value="1"/>
</dbReference>
<dbReference type="FunFam" id="3.30.1390.20:FF:000001">
    <property type="entry name" value="50S ribosomal protein L30"/>
    <property type="match status" value="1"/>
</dbReference>
<dbReference type="Gene3D" id="3.30.1390.20">
    <property type="entry name" value="Ribosomal protein L30, ferredoxin-like fold domain"/>
    <property type="match status" value="1"/>
</dbReference>
<dbReference type="HAMAP" id="MF_01371_B">
    <property type="entry name" value="Ribosomal_uL30_B"/>
    <property type="match status" value="1"/>
</dbReference>
<dbReference type="InterPro" id="IPR036919">
    <property type="entry name" value="Ribo_uL30_ferredoxin-like_sf"/>
</dbReference>
<dbReference type="InterPro" id="IPR005996">
    <property type="entry name" value="Ribosomal_uL30_bac-type"/>
</dbReference>
<dbReference type="InterPro" id="IPR016082">
    <property type="entry name" value="Ribosomal_uL30_ferredoxin-like"/>
</dbReference>
<dbReference type="NCBIfam" id="TIGR01308">
    <property type="entry name" value="rpmD_bact"/>
    <property type="match status" value="1"/>
</dbReference>
<dbReference type="PANTHER" id="PTHR15892:SF2">
    <property type="entry name" value="LARGE RIBOSOMAL SUBUNIT PROTEIN UL30M"/>
    <property type="match status" value="1"/>
</dbReference>
<dbReference type="PANTHER" id="PTHR15892">
    <property type="entry name" value="MITOCHONDRIAL RIBOSOMAL PROTEIN L30"/>
    <property type="match status" value="1"/>
</dbReference>
<dbReference type="Pfam" id="PF00327">
    <property type="entry name" value="Ribosomal_L30"/>
    <property type="match status" value="1"/>
</dbReference>
<dbReference type="PIRSF" id="PIRSF002211">
    <property type="entry name" value="Ribosomal_L30_bac-type"/>
    <property type="match status" value="1"/>
</dbReference>
<dbReference type="SUPFAM" id="SSF55129">
    <property type="entry name" value="Ribosomal protein L30p/L7e"/>
    <property type="match status" value="1"/>
</dbReference>
<comment type="subunit">
    <text evidence="1">Part of the 50S ribosomal subunit.</text>
</comment>
<comment type="similarity">
    <text evidence="1">Belongs to the universal ribosomal protein uL30 family.</text>
</comment>
<protein>
    <recommendedName>
        <fullName evidence="1">Large ribosomal subunit protein uL30</fullName>
    </recommendedName>
    <alternativeName>
        <fullName evidence="2">50S ribosomal protein L30</fullName>
    </alternativeName>
</protein>
<reference key="1">
    <citation type="submission" date="2008-10" db="EMBL/GenBank/DDBJ databases">
        <title>Genome sequence of Clostridium botulinum A2 Kyoto.</title>
        <authorList>
            <person name="Shrivastava S."/>
            <person name="Brinkac L.M."/>
            <person name="Brown J.L."/>
            <person name="Bruce D."/>
            <person name="Detter C.C."/>
            <person name="Johnson E.A."/>
            <person name="Munk C.A."/>
            <person name="Smith L.A."/>
            <person name="Smith T.J."/>
            <person name="Sutton G."/>
            <person name="Brettin T.S."/>
        </authorList>
    </citation>
    <scope>NUCLEOTIDE SEQUENCE [LARGE SCALE GENOMIC DNA]</scope>
    <source>
        <strain>Kyoto / Type A2</strain>
    </source>
</reference>
<gene>
    <name evidence="1" type="primary">rpmD</name>
    <name type="ordered locus">CLM_3930</name>
</gene>
<sequence>MAKVKITLVKSLIGRKKDQIATVNALGLKKIGNIVEHEETPQISGMIKKVSYLLKVEEA</sequence>
<accession>C1FMT3</accession>
<proteinExistence type="inferred from homology"/>
<evidence type="ECO:0000255" key="1">
    <source>
        <dbReference type="HAMAP-Rule" id="MF_01371"/>
    </source>
</evidence>
<evidence type="ECO:0000305" key="2"/>
<keyword id="KW-0687">Ribonucleoprotein</keyword>
<keyword id="KW-0689">Ribosomal protein</keyword>
<organism>
    <name type="scientific">Clostridium botulinum (strain Kyoto / Type A2)</name>
    <dbReference type="NCBI Taxonomy" id="536232"/>
    <lineage>
        <taxon>Bacteria</taxon>
        <taxon>Bacillati</taxon>
        <taxon>Bacillota</taxon>
        <taxon>Clostridia</taxon>
        <taxon>Eubacteriales</taxon>
        <taxon>Clostridiaceae</taxon>
        <taxon>Clostridium</taxon>
    </lineage>
</organism>